<sequence>MEITVIASSSIDEGIGSWDLKTGTEQLQFKPCASPAHGLTAVGEKFLASSQLSARNTSGSIFYWSWTKPQAEVKSYPVEPIKALAANNEGTYLVGGGISGDIYLWEVATGKLLKKWHGHYRSVTCLVFSGDDSLLVSGSQDGSIRVWSLIRLFDDFQRQQGNTLYEHNFNEHTMSVTDIVIDYGGCNAVIISSSEDRTCKVWSLSRGKLLKNIIFPSVINALALDPGGCVFYAGARDSKIYIGAINATSEYGTQVLGSVSEKGKAITCLAYCADGNLLISGSEDGVVCVWDPKSLRHVRTLIHAKGSRKGPVNNIQIVRKTIVANSNKTQVSWKSRGALIPPPLEKYERPVEDTMDGIVTVDPPPFSDVPVYSSFLSADLIDEQVKELQQQGSAATEMEMERLKLEYKRSLQMNEQWQKNYENLLQVVMEEEQIGGTN</sequence>
<comment type="function">
    <text evidence="2">Involved in meristem development. Acts as a negative regulator of the CUC-STM pathway in shoot apical meristem (SAM) neo-formation.</text>
</comment>
<organism>
    <name type="scientific">Arabidopsis thaliana</name>
    <name type="common">Mouse-ear cress</name>
    <dbReference type="NCBI Taxonomy" id="3702"/>
    <lineage>
        <taxon>Eukaryota</taxon>
        <taxon>Viridiplantae</taxon>
        <taxon>Streptophyta</taxon>
        <taxon>Embryophyta</taxon>
        <taxon>Tracheophyta</taxon>
        <taxon>Spermatophyta</taxon>
        <taxon>Magnoliopsida</taxon>
        <taxon>eudicotyledons</taxon>
        <taxon>Gunneridae</taxon>
        <taxon>Pentapetalae</taxon>
        <taxon>rosids</taxon>
        <taxon>malvids</taxon>
        <taxon>Brassicales</taxon>
        <taxon>Brassicaceae</taxon>
        <taxon>Camelineae</taxon>
        <taxon>Arabidopsis</taxon>
    </lineage>
</organism>
<dbReference type="EMBL" id="AL132956">
    <property type="protein sequence ID" value="CAB66397.1"/>
    <property type="molecule type" value="Genomic_DNA"/>
</dbReference>
<dbReference type="EMBL" id="CP002686">
    <property type="protein sequence ID" value="AEE78508.1"/>
    <property type="molecule type" value="Genomic_DNA"/>
</dbReference>
<dbReference type="EMBL" id="BT004624">
    <property type="protein sequence ID" value="AAO42870.1"/>
    <property type="molecule type" value="mRNA"/>
</dbReference>
<dbReference type="EMBL" id="AK227986">
    <property type="protein sequence ID" value="BAE99952.1"/>
    <property type="molecule type" value="mRNA"/>
</dbReference>
<dbReference type="EMBL" id="AY087296">
    <property type="protein sequence ID" value="AAM64848.1"/>
    <property type="molecule type" value="mRNA"/>
</dbReference>
<dbReference type="PIR" id="T45823">
    <property type="entry name" value="T45823"/>
</dbReference>
<dbReference type="RefSeq" id="NP_190487.1">
    <property type="nucleotide sequence ID" value="NM_114777.4"/>
</dbReference>
<dbReference type="SMR" id="Q9M3B4"/>
<dbReference type="BioGRID" id="9397">
    <property type="interactions" value="10"/>
</dbReference>
<dbReference type="FunCoup" id="Q9M3B4">
    <property type="interactions" value="3648"/>
</dbReference>
<dbReference type="IntAct" id="Q9M3B4">
    <property type="interactions" value="2"/>
</dbReference>
<dbReference type="STRING" id="3702.Q9M3B4"/>
<dbReference type="PaxDb" id="3702-AT3G49180.1"/>
<dbReference type="ProteomicsDB" id="236978"/>
<dbReference type="DNASU" id="824079"/>
<dbReference type="EnsemblPlants" id="AT3G49180.1">
    <property type="protein sequence ID" value="AT3G49180.1"/>
    <property type="gene ID" value="AT3G49180"/>
</dbReference>
<dbReference type="GeneID" id="824079"/>
<dbReference type="Gramene" id="AT3G49180.1">
    <property type="protein sequence ID" value="AT3G49180.1"/>
    <property type="gene ID" value="AT3G49180"/>
</dbReference>
<dbReference type="KEGG" id="ath:AT3G49180"/>
<dbReference type="Araport" id="AT3G49180"/>
<dbReference type="TAIR" id="AT3G49180">
    <property type="gene designation" value="RID3"/>
</dbReference>
<dbReference type="eggNOG" id="KOG0646">
    <property type="taxonomic scope" value="Eukaryota"/>
</dbReference>
<dbReference type="HOGENOM" id="CLU_029749_3_0_1"/>
<dbReference type="InParanoid" id="Q9M3B4"/>
<dbReference type="OMA" id="GVNARIY"/>
<dbReference type="PhylomeDB" id="Q9M3B4"/>
<dbReference type="CD-CODE" id="4299E36E">
    <property type="entry name" value="Nucleolus"/>
</dbReference>
<dbReference type="PRO" id="PR:Q9M3B4"/>
<dbReference type="Proteomes" id="UP000006548">
    <property type="component" value="Chromosome 3"/>
</dbReference>
<dbReference type="ExpressionAtlas" id="Q9M3B4">
    <property type="expression patterns" value="baseline and differential"/>
</dbReference>
<dbReference type="GO" id="GO:0080008">
    <property type="term" value="C:Cul4-RING E3 ubiquitin ligase complex"/>
    <property type="evidence" value="ECO:0000250"/>
    <property type="project" value="TAIR"/>
</dbReference>
<dbReference type="GO" id="GO:1902184">
    <property type="term" value="P:negative regulation of shoot apical meristem development"/>
    <property type="evidence" value="ECO:0000315"/>
    <property type="project" value="UniProtKB"/>
</dbReference>
<dbReference type="CDD" id="cd00200">
    <property type="entry name" value="WD40"/>
    <property type="match status" value="1"/>
</dbReference>
<dbReference type="FunFam" id="2.130.10.10:FF:000600">
    <property type="entry name" value="Protein ROOT INITIATION DEFECTIVE 3"/>
    <property type="match status" value="1"/>
</dbReference>
<dbReference type="Gene3D" id="2.130.10.10">
    <property type="entry name" value="YVTN repeat-like/Quinoprotein amine dehydrogenase"/>
    <property type="match status" value="2"/>
</dbReference>
<dbReference type="InterPro" id="IPR020472">
    <property type="entry name" value="G-protein_beta_WD-40_rep"/>
</dbReference>
<dbReference type="InterPro" id="IPR015943">
    <property type="entry name" value="WD40/YVTN_repeat-like_dom_sf"/>
</dbReference>
<dbReference type="InterPro" id="IPR036322">
    <property type="entry name" value="WD40_repeat_dom_sf"/>
</dbReference>
<dbReference type="InterPro" id="IPR001680">
    <property type="entry name" value="WD40_rpt"/>
</dbReference>
<dbReference type="InterPro" id="IPR045227">
    <property type="entry name" value="WDR18/Ipi3/RID3"/>
</dbReference>
<dbReference type="PANTHER" id="PTHR18763:SF0">
    <property type="entry name" value="WD REPEAT-CONTAINING PROTEIN 18"/>
    <property type="match status" value="1"/>
</dbReference>
<dbReference type="PANTHER" id="PTHR18763">
    <property type="entry name" value="WD-REPEAT PROTEIN 18"/>
    <property type="match status" value="1"/>
</dbReference>
<dbReference type="Pfam" id="PF00400">
    <property type="entry name" value="WD40"/>
    <property type="match status" value="3"/>
</dbReference>
<dbReference type="PRINTS" id="PR00320">
    <property type="entry name" value="GPROTEINBRPT"/>
</dbReference>
<dbReference type="SMART" id="SM00320">
    <property type="entry name" value="WD40"/>
    <property type="match status" value="5"/>
</dbReference>
<dbReference type="SUPFAM" id="SSF50978">
    <property type="entry name" value="WD40 repeat-like"/>
    <property type="match status" value="1"/>
</dbReference>
<dbReference type="PROSITE" id="PS00678">
    <property type="entry name" value="WD_REPEATS_1"/>
    <property type="match status" value="1"/>
</dbReference>
<dbReference type="PROSITE" id="PS50082">
    <property type="entry name" value="WD_REPEATS_2"/>
    <property type="match status" value="3"/>
</dbReference>
<dbReference type="PROSITE" id="PS50294">
    <property type="entry name" value="WD_REPEATS_REGION"/>
    <property type="match status" value="1"/>
</dbReference>
<evidence type="ECO:0000255" key="1"/>
<evidence type="ECO:0000269" key="2">
    <source>
    </source>
</evidence>
<evidence type="ECO:0000305" key="3"/>
<proteinExistence type="evidence at protein level"/>
<feature type="chain" id="PRO_0000423020" description="Protein ROOT INITIATION DEFECTIVE 3">
    <location>
        <begin position="1"/>
        <end position="438"/>
    </location>
</feature>
<feature type="repeat" description="WD 1">
    <location>
        <begin position="36"/>
        <end position="74"/>
    </location>
</feature>
<feature type="repeat" description="WD 2">
    <location>
        <begin position="76"/>
        <end position="115"/>
    </location>
</feature>
<feature type="repeat" description="WD 3">
    <location>
        <begin position="118"/>
        <end position="157"/>
    </location>
</feature>
<feature type="repeat" description="WD 4">
    <location>
        <begin position="171"/>
        <end position="212"/>
    </location>
</feature>
<feature type="repeat" description="WD 5">
    <location>
        <begin position="214"/>
        <end position="253"/>
    </location>
</feature>
<feature type="repeat" description="WD 6">
    <location>
        <begin position="261"/>
        <end position="300"/>
    </location>
</feature>
<feature type="coiled-coil region" evidence="1">
    <location>
        <begin position="394"/>
        <end position="434"/>
    </location>
</feature>
<feature type="mutagenesis site" description="In rid3; impaired in adventitious root formation and shoot regeneration at the restrictive temperature of 28 degrees Celsius." evidence="2">
    <original>A</original>
    <variation>V</variation>
    <location>
        <position position="265"/>
    </location>
</feature>
<feature type="sequence conflict" description="In Ref. 5; AAM64848." evidence="3" ref="5">
    <original>G</original>
    <variation>C</variation>
    <location>
        <position position="310"/>
    </location>
</feature>
<accession>Q9M3B4</accession>
<accession>Q8LBC4</accession>
<reference key="1">
    <citation type="journal article" date="2000" name="Nature">
        <title>Sequence and analysis of chromosome 3 of the plant Arabidopsis thaliana.</title>
        <authorList>
            <person name="Salanoubat M."/>
            <person name="Lemcke K."/>
            <person name="Rieger M."/>
            <person name="Ansorge W."/>
            <person name="Unseld M."/>
            <person name="Fartmann B."/>
            <person name="Valle G."/>
            <person name="Bloecker H."/>
            <person name="Perez-Alonso M."/>
            <person name="Obermaier B."/>
            <person name="Delseny M."/>
            <person name="Boutry M."/>
            <person name="Grivell L.A."/>
            <person name="Mache R."/>
            <person name="Puigdomenech P."/>
            <person name="De Simone V."/>
            <person name="Choisne N."/>
            <person name="Artiguenave F."/>
            <person name="Robert C."/>
            <person name="Brottier P."/>
            <person name="Wincker P."/>
            <person name="Cattolico L."/>
            <person name="Weissenbach J."/>
            <person name="Saurin W."/>
            <person name="Quetier F."/>
            <person name="Schaefer M."/>
            <person name="Mueller-Auer S."/>
            <person name="Gabel C."/>
            <person name="Fuchs M."/>
            <person name="Benes V."/>
            <person name="Wurmbach E."/>
            <person name="Drzonek H."/>
            <person name="Erfle H."/>
            <person name="Jordan N."/>
            <person name="Bangert S."/>
            <person name="Wiedelmann R."/>
            <person name="Kranz H."/>
            <person name="Voss H."/>
            <person name="Holland R."/>
            <person name="Brandt P."/>
            <person name="Nyakatura G."/>
            <person name="Vezzi A."/>
            <person name="D'Angelo M."/>
            <person name="Pallavicini A."/>
            <person name="Toppo S."/>
            <person name="Simionati B."/>
            <person name="Conrad A."/>
            <person name="Hornischer K."/>
            <person name="Kauer G."/>
            <person name="Loehnert T.-H."/>
            <person name="Nordsiek G."/>
            <person name="Reichelt J."/>
            <person name="Scharfe M."/>
            <person name="Schoen O."/>
            <person name="Bargues M."/>
            <person name="Terol J."/>
            <person name="Climent J."/>
            <person name="Navarro P."/>
            <person name="Collado C."/>
            <person name="Perez-Perez A."/>
            <person name="Ottenwaelder B."/>
            <person name="Duchemin D."/>
            <person name="Cooke R."/>
            <person name="Laudie M."/>
            <person name="Berger-Llauro C."/>
            <person name="Purnelle B."/>
            <person name="Masuy D."/>
            <person name="de Haan M."/>
            <person name="Maarse A.C."/>
            <person name="Alcaraz J.-P."/>
            <person name="Cottet A."/>
            <person name="Casacuberta E."/>
            <person name="Monfort A."/>
            <person name="Argiriou A."/>
            <person name="Flores M."/>
            <person name="Liguori R."/>
            <person name="Vitale D."/>
            <person name="Mannhaupt G."/>
            <person name="Haase D."/>
            <person name="Schoof H."/>
            <person name="Rudd S."/>
            <person name="Zaccaria P."/>
            <person name="Mewes H.-W."/>
            <person name="Mayer K.F.X."/>
            <person name="Kaul S."/>
            <person name="Town C.D."/>
            <person name="Koo H.L."/>
            <person name="Tallon L.J."/>
            <person name="Jenkins J."/>
            <person name="Rooney T."/>
            <person name="Rizzo M."/>
            <person name="Walts A."/>
            <person name="Utterback T."/>
            <person name="Fujii C.Y."/>
            <person name="Shea T.P."/>
            <person name="Creasy T.H."/>
            <person name="Haas B."/>
            <person name="Maiti R."/>
            <person name="Wu D."/>
            <person name="Peterson J."/>
            <person name="Van Aken S."/>
            <person name="Pai G."/>
            <person name="Militscher J."/>
            <person name="Sellers P."/>
            <person name="Gill J.E."/>
            <person name="Feldblyum T.V."/>
            <person name="Preuss D."/>
            <person name="Lin X."/>
            <person name="Nierman W.C."/>
            <person name="Salzberg S.L."/>
            <person name="White O."/>
            <person name="Venter J.C."/>
            <person name="Fraser C.M."/>
            <person name="Kaneko T."/>
            <person name="Nakamura Y."/>
            <person name="Sato S."/>
            <person name="Kato T."/>
            <person name="Asamizu E."/>
            <person name="Sasamoto S."/>
            <person name="Kimura T."/>
            <person name="Idesawa K."/>
            <person name="Kawashima K."/>
            <person name="Kishida Y."/>
            <person name="Kiyokawa C."/>
            <person name="Kohara M."/>
            <person name="Matsumoto M."/>
            <person name="Matsuno A."/>
            <person name="Muraki A."/>
            <person name="Nakayama S."/>
            <person name="Nakazaki N."/>
            <person name="Shinpo S."/>
            <person name="Takeuchi C."/>
            <person name="Wada T."/>
            <person name="Watanabe A."/>
            <person name="Yamada M."/>
            <person name="Yasuda M."/>
            <person name="Tabata S."/>
        </authorList>
    </citation>
    <scope>NUCLEOTIDE SEQUENCE [LARGE SCALE GENOMIC DNA]</scope>
    <source>
        <strain>cv. Columbia</strain>
    </source>
</reference>
<reference key="2">
    <citation type="journal article" date="2017" name="Plant J.">
        <title>Araport11: a complete reannotation of the Arabidopsis thaliana reference genome.</title>
        <authorList>
            <person name="Cheng C.Y."/>
            <person name="Krishnakumar V."/>
            <person name="Chan A.P."/>
            <person name="Thibaud-Nissen F."/>
            <person name="Schobel S."/>
            <person name="Town C.D."/>
        </authorList>
    </citation>
    <scope>GENOME REANNOTATION</scope>
    <source>
        <strain>cv. Columbia</strain>
    </source>
</reference>
<reference key="3">
    <citation type="journal article" date="2003" name="Science">
        <title>Empirical analysis of transcriptional activity in the Arabidopsis genome.</title>
        <authorList>
            <person name="Yamada K."/>
            <person name="Lim J."/>
            <person name="Dale J.M."/>
            <person name="Chen H."/>
            <person name="Shinn P."/>
            <person name="Palm C.J."/>
            <person name="Southwick A.M."/>
            <person name="Wu H.C."/>
            <person name="Kim C.J."/>
            <person name="Nguyen M."/>
            <person name="Pham P.K."/>
            <person name="Cheuk R.F."/>
            <person name="Karlin-Newmann G."/>
            <person name="Liu S.X."/>
            <person name="Lam B."/>
            <person name="Sakano H."/>
            <person name="Wu T."/>
            <person name="Yu G."/>
            <person name="Miranda M."/>
            <person name="Quach H.L."/>
            <person name="Tripp M."/>
            <person name="Chang C.H."/>
            <person name="Lee J.M."/>
            <person name="Toriumi M.J."/>
            <person name="Chan M.M."/>
            <person name="Tang C.C."/>
            <person name="Onodera C.S."/>
            <person name="Deng J.M."/>
            <person name="Akiyama K."/>
            <person name="Ansari Y."/>
            <person name="Arakawa T."/>
            <person name="Banh J."/>
            <person name="Banno F."/>
            <person name="Bowser L."/>
            <person name="Brooks S.Y."/>
            <person name="Carninci P."/>
            <person name="Chao Q."/>
            <person name="Choy N."/>
            <person name="Enju A."/>
            <person name="Goldsmith A.D."/>
            <person name="Gurjal M."/>
            <person name="Hansen N.F."/>
            <person name="Hayashizaki Y."/>
            <person name="Johnson-Hopson C."/>
            <person name="Hsuan V.W."/>
            <person name="Iida K."/>
            <person name="Karnes M."/>
            <person name="Khan S."/>
            <person name="Koesema E."/>
            <person name="Ishida J."/>
            <person name="Jiang P.X."/>
            <person name="Jones T."/>
            <person name="Kawai J."/>
            <person name="Kamiya A."/>
            <person name="Meyers C."/>
            <person name="Nakajima M."/>
            <person name="Narusaka M."/>
            <person name="Seki M."/>
            <person name="Sakurai T."/>
            <person name="Satou M."/>
            <person name="Tamse R."/>
            <person name="Vaysberg M."/>
            <person name="Wallender E.K."/>
            <person name="Wong C."/>
            <person name="Yamamura Y."/>
            <person name="Yuan S."/>
            <person name="Shinozaki K."/>
            <person name="Davis R.W."/>
            <person name="Theologis A."/>
            <person name="Ecker J.R."/>
        </authorList>
    </citation>
    <scope>NUCLEOTIDE SEQUENCE [LARGE SCALE MRNA]</scope>
    <source>
        <strain>cv. Columbia</strain>
    </source>
</reference>
<reference key="4">
    <citation type="submission" date="2006-07" db="EMBL/GenBank/DDBJ databases">
        <title>Large-scale analysis of RIKEN Arabidopsis full-length (RAFL) cDNAs.</title>
        <authorList>
            <person name="Totoki Y."/>
            <person name="Seki M."/>
            <person name="Ishida J."/>
            <person name="Nakajima M."/>
            <person name="Enju A."/>
            <person name="Kamiya A."/>
            <person name="Narusaka M."/>
            <person name="Shin-i T."/>
            <person name="Nakagawa M."/>
            <person name="Sakamoto N."/>
            <person name="Oishi K."/>
            <person name="Kohara Y."/>
            <person name="Kobayashi M."/>
            <person name="Toyoda A."/>
            <person name="Sakaki Y."/>
            <person name="Sakurai T."/>
            <person name="Iida K."/>
            <person name="Akiyama K."/>
            <person name="Satou M."/>
            <person name="Toyoda T."/>
            <person name="Konagaya A."/>
            <person name="Carninci P."/>
            <person name="Kawai J."/>
            <person name="Hayashizaki Y."/>
            <person name="Shinozaki K."/>
        </authorList>
    </citation>
    <scope>NUCLEOTIDE SEQUENCE [LARGE SCALE MRNA]</scope>
    <source>
        <strain>cv. Columbia</strain>
    </source>
</reference>
<reference key="5">
    <citation type="submission" date="2002-03" db="EMBL/GenBank/DDBJ databases">
        <title>Full-length cDNA from Arabidopsis thaliana.</title>
        <authorList>
            <person name="Brover V.V."/>
            <person name="Troukhan M.E."/>
            <person name="Alexandrov N.A."/>
            <person name="Lu Y.-P."/>
            <person name="Flavell R.B."/>
            <person name="Feldmann K.A."/>
        </authorList>
    </citation>
    <scope>NUCLEOTIDE SEQUENCE [LARGE SCALE MRNA]</scope>
</reference>
<reference key="6">
    <citation type="journal article" date="2003" name="Development">
        <title>Genetic analysis of adventitious root formation with a novel series of temperature-sensitive mutants of Arabidopsis thaliana.</title>
        <authorList>
            <person name="Konishi M."/>
            <person name="Sugiyama M."/>
        </authorList>
    </citation>
    <scope>MUTANT RID3</scope>
</reference>
<reference key="7">
    <citation type="journal article" date="2009" name="Plant J.">
        <title>Identification of novel meristem factors involved in shoot regeneration through the analysis of temperature-sensitive mutants of Arabidopsis.</title>
        <authorList>
            <person name="Tamaki H."/>
            <person name="Konishi M."/>
            <person name="Daimon Y."/>
            <person name="Aida M."/>
            <person name="Tasaka M."/>
            <person name="Sugiyama M."/>
        </authorList>
    </citation>
    <scope>FUNCTION</scope>
    <scope>MUTAGENESIS OF ALA-265</scope>
</reference>
<gene>
    <name type="primary">RID3</name>
    <name type="ordered locus">At3g49180</name>
    <name type="ORF">F2K15.40</name>
</gene>
<keyword id="KW-0175">Coiled coil</keyword>
<keyword id="KW-1185">Reference proteome</keyword>
<keyword id="KW-0677">Repeat</keyword>
<keyword id="KW-0853">WD repeat</keyword>
<protein>
    <recommendedName>
        <fullName>Protein ROOT INITIATION DEFECTIVE 3</fullName>
    </recommendedName>
    <alternativeName>
        <fullName>Root initiation defective 3 protein</fullName>
    </alternativeName>
    <alternativeName>
        <fullName>WD-40 repeat-containing protein RID3</fullName>
    </alternativeName>
</protein>
<name>RID3_ARATH</name>